<name>CVFB_STAA3</name>
<reference key="1">
    <citation type="journal article" date="2006" name="Lancet">
        <title>Complete genome sequence of USA300, an epidemic clone of community-acquired meticillin-resistant Staphylococcus aureus.</title>
        <authorList>
            <person name="Diep B.A."/>
            <person name="Gill S.R."/>
            <person name="Chang R.F."/>
            <person name="Phan T.H."/>
            <person name="Chen J.H."/>
            <person name="Davidson M.G."/>
            <person name="Lin F."/>
            <person name="Lin J."/>
            <person name="Carleton H.A."/>
            <person name="Mongodin E.F."/>
            <person name="Sensabaugh G.F."/>
            <person name="Perdreau-Remington F."/>
        </authorList>
    </citation>
    <scope>NUCLEOTIDE SEQUENCE [LARGE SCALE GENOMIC DNA]</scope>
    <source>
        <strain>USA300</strain>
    </source>
</reference>
<organism>
    <name type="scientific">Staphylococcus aureus (strain USA300)</name>
    <dbReference type="NCBI Taxonomy" id="367830"/>
    <lineage>
        <taxon>Bacteria</taxon>
        <taxon>Bacillati</taxon>
        <taxon>Bacillota</taxon>
        <taxon>Bacilli</taxon>
        <taxon>Bacillales</taxon>
        <taxon>Staphylococcaceae</taxon>
        <taxon>Staphylococcus</taxon>
    </lineage>
</organism>
<comment type="function">
    <text evidence="1">Contributes to the expression of virulence factors and to pathogenicity. Involved in the production of hemolysin, DNase, protease and protein A (By similarity).</text>
</comment>
<comment type="similarity">
    <text evidence="2">Belongs to the CvfB family.</text>
</comment>
<proteinExistence type="inferred from homology"/>
<dbReference type="EMBL" id="CP000255">
    <property type="protein sequence ID" value="ABD22747.1"/>
    <property type="molecule type" value="Genomic_DNA"/>
</dbReference>
<dbReference type="RefSeq" id="WP_001162359.1">
    <property type="nucleotide sequence ID" value="NZ_CP027476.1"/>
</dbReference>
<dbReference type="SMR" id="Q2FH47"/>
<dbReference type="KEGG" id="saa:SAUSA300_1284"/>
<dbReference type="HOGENOM" id="CLU_064885_0_0_9"/>
<dbReference type="OMA" id="GAFMDWG"/>
<dbReference type="Proteomes" id="UP000001939">
    <property type="component" value="Chromosome"/>
</dbReference>
<dbReference type="Gene3D" id="2.40.50.140">
    <property type="entry name" value="Nucleic acid-binding proteins"/>
    <property type="match status" value="2"/>
</dbReference>
<dbReference type="Gene3D" id="1.10.10.10">
    <property type="entry name" value="Winged helix-like DNA-binding domain superfamily/Winged helix DNA-binding domain"/>
    <property type="match status" value="1"/>
</dbReference>
<dbReference type="InterPro" id="IPR014464">
    <property type="entry name" value="CvfB_fam"/>
</dbReference>
<dbReference type="InterPro" id="IPR048588">
    <property type="entry name" value="CvfB_S1_2nd"/>
</dbReference>
<dbReference type="InterPro" id="IPR048587">
    <property type="entry name" value="CvfB_S1_3rd"/>
</dbReference>
<dbReference type="InterPro" id="IPR039566">
    <property type="entry name" value="CvfB_S1_st"/>
</dbReference>
<dbReference type="InterPro" id="IPR040764">
    <property type="entry name" value="CvfB_WH"/>
</dbReference>
<dbReference type="InterPro" id="IPR012340">
    <property type="entry name" value="NA-bd_OB-fold"/>
</dbReference>
<dbReference type="InterPro" id="IPR036388">
    <property type="entry name" value="WH-like_DNA-bd_sf"/>
</dbReference>
<dbReference type="PANTHER" id="PTHR37296">
    <property type="entry name" value="CONSERVED VIRULENCE FACTOR B"/>
    <property type="match status" value="1"/>
</dbReference>
<dbReference type="PANTHER" id="PTHR37296:SF1">
    <property type="entry name" value="CONSERVED VIRULENCE FACTOR B"/>
    <property type="match status" value="1"/>
</dbReference>
<dbReference type="Pfam" id="PF21191">
    <property type="entry name" value="CvfB_1st"/>
    <property type="match status" value="1"/>
</dbReference>
<dbReference type="Pfam" id="PF21543">
    <property type="entry name" value="CvfB_2nd"/>
    <property type="match status" value="1"/>
</dbReference>
<dbReference type="Pfam" id="PF17783">
    <property type="entry name" value="CvfB_WH"/>
    <property type="match status" value="1"/>
</dbReference>
<dbReference type="Pfam" id="PF13509">
    <property type="entry name" value="S1_2"/>
    <property type="match status" value="1"/>
</dbReference>
<dbReference type="PIRSF" id="PIRSF012524">
    <property type="entry name" value="YitL_S1"/>
    <property type="match status" value="1"/>
</dbReference>
<evidence type="ECO:0000250" key="1"/>
<evidence type="ECO:0000305" key="2"/>
<gene>
    <name type="primary">cvfB</name>
    <name type="ordered locus">SAUSA300_1284</name>
</gene>
<keyword id="KW-0843">Virulence</keyword>
<accession>Q2FH47</accession>
<protein>
    <recommendedName>
        <fullName>Conserved virulence factor B</fullName>
    </recommendedName>
</protein>
<sequence length="300" mass="34199">MALDKDIVGSIEFLEVVGLQGSTYLLKGPNGENVKLNQSEMNDDDELEVGEEYSFFIYPNRSGELFATQNMPDITKDKYDFAKVLKTDRDGARIDVGLPREVLVPWEDLPKVKSLWPQPGDYLLVTLRIDRENHMYGRLASESVVENMFTPVHDDNLKNEVIEAKPYRVLRIGSFLLSESGYKIFVHESERKAEPRLGESVQVRIIGHNDKGELNGSFLPLAHERLDDDGQVIFDLLVEYDGELPFWDKSSPEAIKEVFNMSKGSFKRAIGHLYKQKIINIETGKIALTKKGWSRMDSKE</sequence>
<feature type="chain" id="PRO_0000282297" description="Conserved virulence factor B">
    <location>
        <begin position="1"/>
        <end position="300"/>
    </location>
</feature>